<dbReference type="EMBL" id="CP000036">
    <property type="protein sequence ID" value="ABB65454.1"/>
    <property type="molecule type" value="Genomic_DNA"/>
</dbReference>
<dbReference type="RefSeq" id="WP_001024875.1">
    <property type="nucleotide sequence ID" value="NC_007613.1"/>
</dbReference>
<dbReference type="SMR" id="Q323Q4"/>
<dbReference type="KEGG" id="sbo:SBO_0781"/>
<dbReference type="HOGENOM" id="CLU_035023_2_2_6"/>
<dbReference type="Proteomes" id="UP000007067">
    <property type="component" value="Chromosome"/>
</dbReference>
<dbReference type="GO" id="GO:0005886">
    <property type="term" value="C:plasma membrane"/>
    <property type="evidence" value="ECO:0007669"/>
    <property type="project" value="UniProtKB-SubCell"/>
</dbReference>
<dbReference type="GO" id="GO:0008324">
    <property type="term" value="F:monoatomic cation transmembrane transporter activity"/>
    <property type="evidence" value="ECO:0007669"/>
    <property type="project" value="InterPro"/>
</dbReference>
<dbReference type="GO" id="GO:0006813">
    <property type="term" value="P:potassium ion transport"/>
    <property type="evidence" value="ECO:0007669"/>
    <property type="project" value="InterPro"/>
</dbReference>
<dbReference type="FunFam" id="3.30.70.1450:FF:000003">
    <property type="entry name" value="Putative transport protein YbjL"/>
    <property type="match status" value="1"/>
</dbReference>
<dbReference type="Gene3D" id="3.30.70.1450">
    <property type="entry name" value="Regulator of K+ conductance, C-terminal domain"/>
    <property type="match status" value="2"/>
</dbReference>
<dbReference type="HAMAP" id="MF_01015">
    <property type="entry name" value="YbjL"/>
    <property type="match status" value="1"/>
</dbReference>
<dbReference type="InterPro" id="IPR050144">
    <property type="entry name" value="AAE_transporter"/>
</dbReference>
<dbReference type="InterPro" id="IPR006037">
    <property type="entry name" value="RCK_C"/>
</dbReference>
<dbReference type="InterPro" id="IPR036721">
    <property type="entry name" value="RCK_C_sf"/>
</dbReference>
<dbReference type="InterPro" id="IPR023017">
    <property type="entry name" value="Transp_YbjL_put"/>
</dbReference>
<dbReference type="InterPro" id="IPR006512">
    <property type="entry name" value="YidE_YbjL"/>
</dbReference>
<dbReference type="NCBIfam" id="NF003440">
    <property type="entry name" value="PRK04972.1"/>
    <property type="match status" value="1"/>
</dbReference>
<dbReference type="NCBIfam" id="TIGR01625">
    <property type="entry name" value="YidE_YbjL_dupl"/>
    <property type="match status" value="2"/>
</dbReference>
<dbReference type="PANTHER" id="PTHR30445">
    <property type="entry name" value="K(+)_H(+) ANTIPORTER SUBUNIT KHTT"/>
    <property type="match status" value="1"/>
</dbReference>
<dbReference type="PANTHER" id="PTHR30445:SF10">
    <property type="entry name" value="TRANSPORT PROTEIN YBJL-RELATED"/>
    <property type="match status" value="1"/>
</dbReference>
<dbReference type="Pfam" id="PF06826">
    <property type="entry name" value="Asp-Al_Ex"/>
    <property type="match status" value="2"/>
</dbReference>
<dbReference type="Pfam" id="PF02080">
    <property type="entry name" value="TrkA_C"/>
    <property type="match status" value="2"/>
</dbReference>
<dbReference type="SUPFAM" id="SSF116726">
    <property type="entry name" value="TrkA C-terminal domain-like"/>
    <property type="match status" value="2"/>
</dbReference>
<dbReference type="PROSITE" id="PS51202">
    <property type="entry name" value="RCK_C"/>
    <property type="match status" value="2"/>
</dbReference>
<comment type="subcellular location">
    <subcellularLocation>
        <location evidence="1">Cell membrane</location>
        <topology evidence="1">Multi-pass membrane protein</topology>
    </subcellularLocation>
</comment>
<comment type="similarity">
    <text evidence="1">Belongs to the AAE transporter (TC 2.A.81) family. YbjL subfamily.</text>
</comment>
<proteinExistence type="inferred from homology"/>
<keyword id="KW-1003">Cell membrane</keyword>
<keyword id="KW-0472">Membrane</keyword>
<keyword id="KW-0677">Repeat</keyword>
<keyword id="KW-0812">Transmembrane</keyword>
<keyword id="KW-1133">Transmembrane helix</keyword>
<keyword id="KW-0813">Transport</keyword>
<feature type="chain" id="PRO_0000226887" description="Putative transport protein YbjL">
    <location>
        <begin position="1"/>
        <end position="561"/>
    </location>
</feature>
<feature type="transmembrane region" description="Helical" evidence="1">
    <location>
        <begin position="8"/>
        <end position="28"/>
    </location>
</feature>
<feature type="transmembrane region" description="Helical" evidence="1">
    <location>
        <begin position="32"/>
        <end position="52"/>
    </location>
</feature>
<feature type="transmembrane region" description="Helical" evidence="1">
    <location>
        <begin position="66"/>
        <end position="86"/>
    </location>
</feature>
<feature type="transmembrane region" description="Helical" evidence="1">
    <location>
        <begin position="94"/>
        <end position="114"/>
    </location>
</feature>
<feature type="transmembrane region" description="Helical" evidence="1">
    <location>
        <begin position="158"/>
        <end position="178"/>
    </location>
</feature>
<feature type="transmembrane region" description="Helical" evidence="1">
    <location>
        <begin position="383"/>
        <end position="403"/>
    </location>
</feature>
<feature type="transmembrane region" description="Helical" evidence="1">
    <location>
        <begin position="406"/>
        <end position="426"/>
    </location>
</feature>
<feature type="transmembrane region" description="Helical" evidence="1">
    <location>
        <begin position="451"/>
        <end position="471"/>
    </location>
</feature>
<feature type="transmembrane region" description="Helical" evidence="1">
    <location>
        <begin position="475"/>
        <end position="495"/>
    </location>
</feature>
<feature type="transmembrane region" description="Helical" evidence="1">
    <location>
        <begin position="540"/>
        <end position="560"/>
    </location>
</feature>
<feature type="domain" description="RCK C-terminal 1" evidence="1">
    <location>
        <begin position="200"/>
        <end position="288"/>
    </location>
</feature>
<feature type="domain" description="RCK C-terminal 2" evidence="1">
    <location>
        <begin position="292"/>
        <end position="373"/>
    </location>
</feature>
<organism>
    <name type="scientific">Shigella boydii serotype 4 (strain Sb227)</name>
    <dbReference type="NCBI Taxonomy" id="300268"/>
    <lineage>
        <taxon>Bacteria</taxon>
        <taxon>Pseudomonadati</taxon>
        <taxon>Pseudomonadota</taxon>
        <taxon>Gammaproteobacteria</taxon>
        <taxon>Enterobacterales</taxon>
        <taxon>Enterobacteriaceae</taxon>
        <taxon>Shigella</taxon>
    </lineage>
</organism>
<reference key="1">
    <citation type="journal article" date="2005" name="Nucleic Acids Res.">
        <title>Genome dynamics and diversity of Shigella species, the etiologic agents of bacillary dysentery.</title>
        <authorList>
            <person name="Yang F."/>
            <person name="Yang J."/>
            <person name="Zhang X."/>
            <person name="Chen L."/>
            <person name="Jiang Y."/>
            <person name="Yan Y."/>
            <person name="Tang X."/>
            <person name="Wang J."/>
            <person name="Xiong Z."/>
            <person name="Dong J."/>
            <person name="Xue Y."/>
            <person name="Zhu Y."/>
            <person name="Xu X."/>
            <person name="Sun L."/>
            <person name="Chen S."/>
            <person name="Nie H."/>
            <person name="Peng J."/>
            <person name="Xu J."/>
            <person name="Wang Y."/>
            <person name="Yuan Z."/>
            <person name="Wen Y."/>
            <person name="Yao Z."/>
            <person name="Shen Y."/>
            <person name="Qiang B."/>
            <person name="Hou Y."/>
            <person name="Yu J."/>
            <person name="Jin Q."/>
        </authorList>
    </citation>
    <scope>NUCLEOTIDE SEQUENCE [LARGE SCALE GENOMIC DNA]</scope>
    <source>
        <strain>Sb227</strain>
    </source>
</reference>
<sequence>MNINVAELLNGNYILLLFVVLALGLCLGKLRLGSIQLGNSIGVLVVSLLLGQQHFSINTDALNLGFMLFIFCVGVEAGPNFFSIFFRDGKNYLMLALVMVGSALVIALGLGKLFGWDIGLTAGMLAGSMTSTPVLVGAGDTLRHSGMESRQLSLALDNLSLGYALTYLIGLVSLIVGARYLPKLQHQDLQTSAQQIARERGLDTDANRKVYLPVIRAYRVGPELVAWTDGKNLRELGIYRQTGCYIERIRRNGILANPDGDAVLQMGDEIALVGYPDAHARLDPSFRNGKEVFDRDLLDMRIVTEEVVVKNHNAVGKRLAQLKLTDHGCFLNRVIRSQIEMPIDDNVVLNKGDVLQVSGDARRVKTIADRIGFISIHSQVTDLLAFCAFFVIGLMIGMITFQFSTFSFGMGNAAGLLFAGIMLGFMRANHPTFGYIPQGALSMVKEFGLMVFMAGVGLSAGSGINNGLGAIGGQMLIAGLIVSLVPVVICFLFGAYVLRMNRALLFGAMMGARTCAPAMEIISDTAHSNIPALGYAGTYAIANVLLTLAGTIIVMVWPGLG</sequence>
<gene>
    <name evidence="1" type="primary">ybjL</name>
    <name type="ordered locus">SBO_0781</name>
</gene>
<name>YBJL_SHIBS</name>
<evidence type="ECO:0000255" key="1">
    <source>
        <dbReference type="HAMAP-Rule" id="MF_01015"/>
    </source>
</evidence>
<accession>Q323Q4</accession>
<protein>
    <recommendedName>
        <fullName evidence="1">Putative transport protein YbjL</fullName>
    </recommendedName>
</protein>